<dbReference type="EMBL" id="CP001389">
    <property type="protein sequence ID" value="ACP24564.1"/>
    <property type="molecule type" value="Genomic_DNA"/>
</dbReference>
<dbReference type="RefSeq" id="WP_012707349.1">
    <property type="nucleotide sequence ID" value="NC_012587.1"/>
</dbReference>
<dbReference type="RefSeq" id="YP_002825317.1">
    <property type="nucleotide sequence ID" value="NC_012587.1"/>
</dbReference>
<dbReference type="STRING" id="394.NGR_c07710"/>
<dbReference type="KEGG" id="rhi:NGR_c07710"/>
<dbReference type="PATRIC" id="fig|394.7.peg.3587"/>
<dbReference type="eggNOG" id="COG2983">
    <property type="taxonomic scope" value="Bacteria"/>
</dbReference>
<dbReference type="HOGENOM" id="CLU_109769_0_1_5"/>
<dbReference type="OrthoDB" id="9786855at2"/>
<dbReference type="Proteomes" id="UP000001054">
    <property type="component" value="Chromosome"/>
</dbReference>
<dbReference type="HAMAP" id="MF_00676">
    <property type="entry name" value="UPF0260"/>
    <property type="match status" value="1"/>
</dbReference>
<dbReference type="InterPro" id="IPR005358">
    <property type="entry name" value="Puta_zinc/iron-chelating_dom"/>
</dbReference>
<dbReference type="InterPro" id="IPR008228">
    <property type="entry name" value="UCP006173"/>
</dbReference>
<dbReference type="NCBIfam" id="NF003501">
    <property type="entry name" value="PRK05170.1-5"/>
    <property type="match status" value="1"/>
</dbReference>
<dbReference type="NCBIfam" id="NF003507">
    <property type="entry name" value="PRK05170.2-5"/>
    <property type="match status" value="1"/>
</dbReference>
<dbReference type="PANTHER" id="PTHR37421">
    <property type="entry name" value="UPF0260 PROTEIN YCGN"/>
    <property type="match status" value="1"/>
</dbReference>
<dbReference type="PANTHER" id="PTHR37421:SF1">
    <property type="entry name" value="UPF0260 PROTEIN YCGN"/>
    <property type="match status" value="1"/>
</dbReference>
<dbReference type="Pfam" id="PF03692">
    <property type="entry name" value="CxxCxxCC"/>
    <property type="match status" value="1"/>
</dbReference>
<dbReference type="PIRSF" id="PIRSF006173">
    <property type="entry name" value="UCP006173"/>
    <property type="match status" value="1"/>
</dbReference>
<reference key="1">
    <citation type="journal article" date="2009" name="Appl. Environ. Microbiol.">
        <title>Rhizobium sp. strain NGR234 possesses a remarkable number of secretion systems.</title>
        <authorList>
            <person name="Schmeisser C."/>
            <person name="Liesegang H."/>
            <person name="Krysciak D."/>
            <person name="Bakkou N."/>
            <person name="Le Quere A."/>
            <person name="Wollherr A."/>
            <person name="Heinemeyer I."/>
            <person name="Morgenstern B."/>
            <person name="Pommerening-Roeser A."/>
            <person name="Flores M."/>
            <person name="Palacios R."/>
            <person name="Brenner S."/>
            <person name="Gottschalk G."/>
            <person name="Schmitz R.A."/>
            <person name="Broughton W.J."/>
            <person name="Perret X."/>
            <person name="Strittmatter A.W."/>
            <person name="Streit W.R."/>
        </authorList>
    </citation>
    <scope>NUCLEOTIDE SEQUENCE [LARGE SCALE GENOMIC DNA]</scope>
    <source>
        <strain>NBRC 101917 / NGR234</strain>
    </source>
</reference>
<proteinExistence type="inferred from homology"/>
<organism>
    <name type="scientific">Sinorhizobium fredii (strain NBRC 101917 / NGR234)</name>
    <dbReference type="NCBI Taxonomy" id="394"/>
    <lineage>
        <taxon>Bacteria</taxon>
        <taxon>Pseudomonadati</taxon>
        <taxon>Pseudomonadota</taxon>
        <taxon>Alphaproteobacteria</taxon>
        <taxon>Hyphomicrobiales</taxon>
        <taxon>Rhizobiaceae</taxon>
        <taxon>Sinorhizobium/Ensifer group</taxon>
        <taxon>Sinorhizobium</taxon>
    </lineage>
</organism>
<accession>C3M8L8</accession>
<protein>
    <recommendedName>
        <fullName evidence="1">UPF0260 protein NGR_c07710</fullName>
    </recommendedName>
</protein>
<keyword id="KW-1185">Reference proteome</keyword>
<comment type="similarity">
    <text evidence="1">Belongs to the UPF0260 family.</text>
</comment>
<sequence length="155" mass="17576">MGDMPFWKTKSLDEMTNAEWESLCDGCGLCCLNKLEDWDTGEIAWTSIRCTLLDGENCRCKDYDNRQATVPDCVQLTPKAVREISWLPPTCGYRLVAEGRDLYWWHPLVSGDPETVHAAGISVRGRTVAEDGIEIEDYEDYLVTWPLEVGLEPVE</sequence>
<gene>
    <name type="ordered locus">NGR_c07710</name>
</gene>
<evidence type="ECO:0000255" key="1">
    <source>
        <dbReference type="HAMAP-Rule" id="MF_00676"/>
    </source>
</evidence>
<feature type="chain" id="PRO_1000147701" description="UPF0260 protein NGR_c07710">
    <location>
        <begin position="1"/>
        <end position="155"/>
    </location>
</feature>
<name>Y771_SINFN</name>